<reference key="1">
    <citation type="journal article" date="1991" name="J. Biol. Chem.">
        <title>Halobacterial S9 operon. Three ribosomal protein genes are cotranscribed with genes encoding a tRNA(Leu), the enolase, and a putative membrane protein in the archaebacterium Haloarcula (Halobacterium) marismortui.</title>
        <authorList>
            <person name="Kroemer W.J."/>
            <person name="Arndt E."/>
        </authorList>
    </citation>
    <scope>NUCLEOTIDE SEQUENCE [GENOMIC DNA]</scope>
</reference>
<reference key="2">
    <citation type="journal article" date="1995" name="Eur. J. Biochem.">
        <title>Cartography of ribosomal proteins of the 30S subunit from the halophilic Haloarcula marismortui and complete sequence analysis of protein HS26.</title>
        <authorList>
            <person name="Engemann S."/>
            <person name="Noelle R."/>
            <person name="Herfurth E."/>
            <person name="Briesemeister U."/>
            <person name="Grelle G."/>
            <person name="Wittmann-Liebold B."/>
        </authorList>
    </citation>
    <scope>NUCLEOTIDE SEQUENCE [GENOMIC DNA]</scope>
    <scope>PROTEIN SEQUENCE OF 84-97; 130-139; 180-185 AND 250-260</scope>
</reference>
<reference key="3">
    <citation type="journal article" date="2004" name="Genome Res.">
        <title>Genome sequence of Haloarcula marismortui: a halophilic archaeon from the Dead Sea.</title>
        <authorList>
            <person name="Baliga N.S."/>
            <person name="Bonneau R."/>
            <person name="Facciotti M.T."/>
            <person name="Pan M."/>
            <person name="Glusman G."/>
            <person name="Deutsch E.W."/>
            <person name="Shannon P."/>
            <person name="Chiu Y."/>
            <person name="Weng R.S."/>
            <person name="Gan R.R."/>
            <person name="Hung P."/>
            <person name="Date S.V."/>
            <person name="Marcotte E."/>
            <person name="Hood L."/>
            <person name="Ng W.V."/>
        </authorList>
    </citation>
    <scope>NUCLEOTIDE SEQUENCE [LARGE SCALE GENOMIC DNA]</scope>
    <source>
        <strain>ATCC 43049 / DSM 3752 / JCM 8966 / VKM B-1809</strain>
    </source>
</reference>
<proteinExistence type="evidence at protein level"/>
<accession>P29202</accession>
<accession>Q5V5Q2</accession>
<dbReference type="EMBL" id="M76567">
    <property type="protein sequence ID" value="AAA73102.1"/>
    <property type="molecule type" value="Genomic_DNA"/>
</dbReference>
<dbReference type="EMBL" id="AY596297">
    <property type="protein sequence ID" value="AAV45150.1"/>
    <property type="molecule type" value="Genomic_DNA"/>
</dbReference>
<dbReference type="PIR" id="G41715">
    <property type="entry name" value="G41715"/>
</dbReference>
<dbReference type="SMR" id="P29202"/>
<dbReference type="STRING" id="272569.rrnAC0070"/>
<dbReference type="PaxDb" id="272569-rrnAC0070"/>
<dbReference type="EnsemblBacteria" id="AAV45150">
    <property type="protein sequence ID" value="AAV45150"/>
    <property type="gene ID" value="rrnAC0070"/>
</dbReference>
<dbReference type="KEGG" id="hma:rrnAC0070"/>
<dbReference type="PATRIC" id="fig|272569.17.peg.878"/>
<dbReference type="eggNOG" id="arCOG04245">
    <property type="taxonomic scope" value="Archaea"/>
</dbReference>
<dbReference type="HOGENOM" id="CLU_058171_3_0_2"/>
<dbReference type="Proteomes" id="UP000001169">
    <property type="component" value="Chromosome I"/>
</dbReference>
<dbReference type="GO" id="GO:0015935">
    <property type="term" value="C:small ribosomal subunit"/>
    <property type="evidence" value="ECO:0007669"/>
    <property type="project" value="InterPro"/>
</dbReference>
<dbReference type="GO" id="GO:0003735">
    <property type="term" value="F:structural constituent of ribosome"/>
    <property type="evidence" value="ECO:0007669"/>
    <property type="project" value="InterPro"/>
</dbReference>
<dbReference type="GO" id="GO:0006412">
    <property type="term" value="P:translation"/>
    <property type="evidence" value="ECO:0007669"/>
    <property type="project" value="UniProtKB-UniRule"/>
</dbReference>
<dbReference type="CDD" id="cd01425">
    <property type="entry name" value="RPS2"/>
    <property type="match status" value="1"/>
</dbReference>
<dbReference type="FunFam" id="3.40.50.10490:FF:000030">
    <property type="entry name" value="30S ribosomal protein S2"/>
    <property type="match status" value="1"/>
</dbReference>
<dbReference type="Gene3D" id="3.40.50.10490">
    <property type="entry name" value="Glucose-6-phosphate isomerase like protein, domain 1"/>
    <property type="match status" value="1"/>
</dbReference>
<dbReference type="HAMAP" id="MF_00291_A">
    <property type="entry name" value="Ribosomal_uS2_A"/>
    <property type="match status" value="1"/>
</dbReference>
<dbReference type="InterPro" id="IPR001865">
    <property type="entry name" value="Ribosomal_uS2"/>
</dbReference>
<dbReference type="InterPro" id="IPR023454">
    <property type="entry name" value="Ribosomal_uS2_arc"/>
</dbReference>
<dbReference type="InterPro" id="IPR018130">
    <property type="entry name" value="Ribosomal_uS2_CS"/>
</dbReference>
<dbReference type="InterPro" id="IPR005707">
    <property type="entry name" value="Ribosomal_uS2_euk/arc"/>
</dbReference>
<dbReference type="InterPro" id="IPR023591">
    <property type="entry name" value="Ribosomal_uS2_flav_dom_sf"/>
</dbReference>
<dbReference type="NCBIfam" id="TIGR01012">
    <property type="entry name" value="uS2_euk_arch"/>
    <property type="match status" value="1"/>
</dbReference>
<dbReference type="PANTHER" id="PTHR11489">
    <property type="entry name" value="40S RIBOSOMAL PROTEIN SA"/>
    <property type="match status" value="1"/>
</dbReference>
<dbReference type="Pfam" id="PF00318">
    <property type="entry name" value="Ribosomal_S2"/>
    <property type="match status" value="2"/>
</dbReference>
<dbReference type="PRINTS" id="PR00395">
    <property type="entry name" value="RIBOSOMALS2"/>
</dbReference>
<dbReference type="SUPFAM" id="SSF52313">
    <property type="entry name" value="Ribosomal protein S2"/>
    <property type="match status" value="1"/>
</dbReference>
<dbReference type="PROSITE" id="PS00962">
    <property type="entry name" value="RIBOSOMAL_S2_1"/>
    <property type="match status" value="1"/>
</dbReference>
<dbReference type="PROSITE" id="PS00963">
    <property type="entry name" value="RIBOSOMAL_S2_2"/>
    <property type="match status" value="1"/>
</dbReference>
<feature type="chain" id="PRO_0000134320" description="Small ribosomal subunit protein uS2">
    <location>
        <begin position="1"/>
        <end position="267"/>
    </location>
</feature>
<feature type="region of interest" description="Disordered" evidence="1">
    <location>
        <begin position="1"/>
        <end position="72"/>
    </location>
</feature>
<feature type="compositionally biased region" description="Acidic residues" evidence="1">
    <location>
        <begin position="10"/>
        <end position="72"/>
    </location>
</feature>
<feature type="sequence conflict" description="In Ref. 1 and 2." evidence="2" ref="1 2">
    <original>AAG</original>
    <variation>RR</variation>
    <location>
        <begin position="59"/>
        <end position="61"/>
    </location>
</feature>
<comment type="PTM">
    <text>The N-terminus is blocked.</text>
</comment>
<comment type="similarity">
    <text evidence="2">Belongs to the universal ribosomal protein uS2 family.</text>
</comment>
<organism>
    <name type="scientific">Haloarcula marismortui (strain ATCC 43049 / DSM 3752 / JCM 8966 / VKM B-1809)</name>
    <name type="common">Halobacterium marismortui</name>
    <dbReference type="NCBI Taxonomy" id="272569"/>
    <lineage>
        <taxon>Archaea</taxon>
        <taxon>Methanobacteriati</taxon>
        <taxon>Methanobacteriota</taxon>
        <taxon>Stenosarchaea group</taxon>
        <taxon>Halobacteria</taxon>
        <taxon>Halobacteriales</taxon>
        <taxon>Haloarculaceae</taxon>
        <taxon>Haloarcula</taxon>
    </lineage>
</organism>
<protein>
    <recommendedName>
        <fullName evidence="2">Small ribosomal subunit protein uS2</fullName>
    </recommendedName>
    <alternativeName>
        <fullName>30S ribosomal protein S2</fullName>
    </alternativeName>
    <alternativeName>
        <fullName>HS2</fullName>
    </alternativeName>
    <alternativeName>
        <fullName>ORFMSG</fullName>
    </alternativeName>
</protein>
<gene>
    <name type="primary">rps2</name>
    <name type="ordered locus">rrnAC0070</name>
</gene>
<keyword id="KW-0903">Direct protein sequencing</keyword>
<keyword id="KW-1185">Reference proteome</keyword>
<keyword id="KW-0687">Ribonucleoprotein</keyword>
<keyword id="KW-0689">Ribosomal protein</keyword>
<evidence type="ECO:0000256" key="1">
    <source>
        <dbReference type="SAM" id="MobiDB-lite"/>
    </source>
</evidence>
<evidence type="ECO:0000305" key="2"/>
<sequence length="267" mass="29175">MSGNEKEGLDASDSDFDPSDEDDEAVDAETETEAEQPADDAEEATEAEPTDDESEADEAAGPQLDEDVMPDEQSEADLLIPVEDYLGAGVHIGTQQKTQDMERFIHRVRTDGLYVLDVSMTDERIRTAADFLSNYEPEQILAASSRQYGRFPAEKFAEAIGARVRTGRFIPGTLTNPDYDGYIEPDIVVVTDPIGDAQAVKEAITVGIPVIAMCDSNNTTSNVDLVVPTNNKGRKALSVVYWLLANETLDRRGAEPTYGLDDFESDI</sequence>
<name>RS2_HALMA</name>